<feature type="initiator methionine" description="Removed">
    <location>
        <position position="1"/>
    </location>
</feature>
<feature type="chain" id="PRO_0000198704" description="Myosin light chain 1, skeletal muscle isoform">
    <location>
        <begin position="2"/>
        <end position="192"/>
    </location>
</feature>
<feature type="domain" description="EF-hand 1" evidence="1">
    <location>
        <begin position="48"/>
        <end position="83"/>
    </location>
</feature>
<feature type="domain" description="EF-hand 2" evidence="1">
    <location>
        <begin position="86"/>
        <end position="121"/>
    </location>
</feature>
<feature type="domain" description="EF-hand 3" evidence="1">
    <location>
        <begin position="125"/>
        <end position="160"/>
    </location>
</feature>
<feature type="domain" description="EF-hand 4" evidence="1">
    <location>
        <begin position="160"/>
        <end position="192"/>
    </location>
</feature>
<feature type="region of interest" description="Disordered" evidence="2">
    <location>
        <begin position="1"/>
        <end position="34"/>
    </location>
</feature>
<feature type="compositionally biased region" description="Pro residues" evidence="2">
    <location>
        <begin position="17"/>
        <end position="29"/>
    </location>
</feature>
<feature type="modified residue" description="N,N,N-trimethylalanine" evidence="4">
    <location>
        <position position="2"/>
    </location>
</feature>
<feature type="sequence conflict" description="In Ref. 1; AAA48955." evidence="3" ref="1">
    <original>D</original>
    <variation>E</variation>
    <location>
        <position position="6"/>
    </location>
</feature>
<feature type="sequence conflict" description="In Ref. 4; AAA48960." evidence="3" ref="4">
    <original>S</original>
    <variation>F</variation>
    <location>
        <position position="46"/>
    </location>
</feature>
<feature type="sequence conflict" description="In Ref. 1; AAA48955." evidence="3" ref="1">
    <original>Q</original>
    <variation>QM</variation>
    <location>
        <position position="116"/>
    </location>
</feature>
<feature type="sequence conflict" description="In Ref. 1; AAA48955." evidence="3" ref="1">
    <location>
        <position position="146"/>
    </location>
</feature>
<evidence type="ECO:0000255" key="1">
    <source>
        <dbReference type="PROSITE-ProRule" id="PRU00448"/>
    </source>
</evidence>
<evidence type="ECO:0000256" key="2">
    <source>
        <dbReference type="SAM" id="MobiDB-lite"/>
    </source>
</evidence>
<evidence type="ECO:0000305" key="3"/>
<evidence type="ECO:0000305" key="4">
    <source>
    </source>
</evidence>
<accession>P02604</accession>
<accession>Q90895</accession>
<accession>Q9PWQ5</accession>
<name>MLE1_CHICK</name>
<proteinExistence type="evidence at protein level"/>
<reference key="1">
    <citation type="journal article" date="1984" name="Nature">
        <title>Alternative transcription and two modes of splicing results in two myosin light chains from one gene.</title>
        <authorList>
            <person name="Nabeshima Y."/>
            <person name="Fujii-Kuriyama Y."/>
            <person name="Muramatsu M."/>
            <person name="Ogata K."/>
        </authorList>
    </citation>
    <scope>NUCLEOTIDE SEQUENCE [GENOMIC DNA]</scope>
    <source>
        <tissue>Skeletal muscle</tissue>
    </source>
</reference>
<reference key="2">
    <citation type="journal article" date="1981" name="FEBS Lett.">
        <title>The primary structure of L-1 light chain of chicken fast skeletal muscle myosin and its genetic implication.</title>
        <authorList>
            <person name="Matsuda G."/>
            <person name="Maita T."/>
            <person name="Umegane T."/>
        </authorList>
    </citation>
    <scope>PROTEIN SEQUENCE OF 3-192</scope>
    <source>
        <tissue>Skeletal muscle</tissue>
    </source>
</reference>
<reference key="3">
    <citation type="journal article" date="1982" name="Hoppe-Seyler's Z. Physiol. Chem.">
        <title>Amino-acid sequence of the L-1 light chain of chicken fast skeletal-muscle myosin.</title>
        <authorList>
            <person name="Umegane T."/>
            <person name="Maita T."/>
            <person name="Matsuda G."/>
        </authorList>
    </citation>
    <scope>PROTEIN SEQUENCE OF 3-192</scope>
    <source>
        <tissue>Skeletal muscle</tissue>
    </source>
</reference>
<reference key="4">
    <citation type="journal article" date="1982" name="Nucleic Acids Res.">
        <title>Molecular cloning and nucleotide sequences of the complementary DNAs to chicken skeletal muscle myosin two alkali light chain mRNAs.</title>
        <authorList>
            <person name="Nabeshima Y."/>
            <person name="Fujii-Kuriyama Y."/>
            <person name="Muramatsu M."/>
            <person name="Ogata K."/>
        </authorList>
    </citation>
    <scope>NUCLEOTIDE SEQUENCE [MRNA] OF 16-192</scope>
</reference>
<reference key="5">
    <citation type="journal article" date="1985" name="Eur. J. Biochem.">
        <title>The widespread distribution of alpha-N-trimethylalanine as the N-terminal amino acid of light chains from vertebrate striated muscle myosins.</title>
        <authorList>
            <person name="Henry G.D."/>
            <person name="Trayer I.P."/>
            <person name="Brewer S."/>
            <person name="Levine B.A."/>
        </authorList>
    </citation>
    <scope>METHYLATION AT ALA-2</scope>
</reference>
<reference key="6">
    <citation type="journal article" date="1993" name="Science">
        <title>Three-dimensional structure of myosin subfragment-1: a molecular motor.</title>
        <authorList>
            <person name="Rayment I."/>
            <person name="Rypniewski W.R."/>
            <person name="Schmidt-Base K."/>
            <person name="Smith R."/>
            <person name="Tomchick D.R."/>
            <person name="Benning M.M."/>
            <person name="Winkelmann D.A."/>
            <person name="Wesenberg G."/>
            <person name="Holden H.M."/>
        </authorList>
    </citation>
    <scope>X-RAY CRYSTALLOGRAPHY (2.8 ANGSTROMS)</scope>
</reference>
<comment type="subunit">
    <text>Myosin is a hexamer of 2 heavy chains and 4 light chains.</text>
</comment>
<comment type="alternative products">
    <event type="alternative splicing"/>
    <isoform>
        <id>P02604-1</id>
        <name>MLC1</name>
        <sequence type="displayed"/>
    </isoform>
    <isoform>
        <id>P02605-1</id>
        <name>MLC3</name>
        <sequence type="external"/>
    </isoform>
</comment>
<comment type="PTM">
    <text>The N-terminus is blocked. N,N,N-trimethylalanine, found in other myosin light chains would not have been detected in the N-terminal tryptic peptide in PubMed:6709041 and PubMed:7238855 because it would remain trimethylated and ninhydrin negative after hydrolysis.</text>
</comment>
<protein>
    <recommendedName>
        <fullName>Myosin light chain 1, skeletal muscle isoform</fullName>
    </recommendedName>
    <alternativeName>
        <fullName>Alkali myosin light chain 1</fullName>
        <shortName>MLC-1</shortName>
    </alternativeName>
    <alternativeName>
        <fullName>Myosin light chain 1f</fullName>
    </alternativeName>
    <alternativeName>
        <fullName>Myosin light chain alkali 1</fullName>
        <shortName>Myosin light chain A1</shortName>
    </alternativeName>
    <alternativeName>
        <fullName>Skeletal-muscle myosin L-1 light chain</fullName>
    </alternativeName>
</protein>
<sequence length="192" mass="20899">MAPKKDVKKPAAAAAPAPAPAPAPAPAPAKPKEPAIDLKSIKIEFSKEQQDDFKEAFLLFDRTGDAKITLSQVGDIVRALGQNPTNAEINKILGNPSKEEMNAKKITFEEFLPMLQAAANNKDQGTFEDFVEGLRVFDKEGNGTVMGAELRHVLATLGEKMTEEEVEELMKGQEDSNGCINYEAFVKHIMSV</sequence>
<keyword id="KW-0002">3D-structure</keyword>
<keyword id="KW-0025">Alternative splicing</keyword>
<keyword id="KW-0903">Direct protein sequencing</keyword>
<keyword id="KW-0488">Methylation</keyword>
<keyword id="KW-0505">Motor protein</keyword>
<keyword id="KW-0514">Muscle protein</keyword>
<keyword id="KW-0518">Myosin</keyword>
<keyword id="KW-1185">Reference proteome</keyword>
<keyword id="KW-0677">Repeat</keyword>
<organism>
    <name type="scientific">Gallus gallus</name>
    <name type="common">Chicken</name>
    <dbReference type="NCBI Taxonomy" id="9031"/>
    <lineage>
        <taxon>Eukaryota</taxon>
        <taxon>Metazoa</taxon>
        <taxon>Chordata</taxon>
        <taxon>Craniata</taxon>
        <taxon>Vertebrata</taxon>
        <taxon>Euteleostomi</taxon>
        <taxon>Archelosauria</taxon>
        <taxon>Archosauria</taxon>
        <taxon>Dinosauria</taxon>
        <taxon>Saurischia</taxon>
        <taxon>Theropoda</taxon>
        <taxon>Coelurosauria</taxon>
        <taxon>Aves</taxon>
        <taxon>Neognathae</taxon>
        <taxon>Galloanserae</taxon>
        <taxon>Galliformes</taxon>
        <taxon>Phasianidae</taxon>
        <taxon>Phasianinae</taxon>
        <taxon>Gallus</taxon>
    </lineage>
</organism>
<dbReference type="EMBL" id="K02610">
    <property type="protein sequence ID" value="AAA48955.1"/>
    <property type="molecule type" value="Genomic_DNA"/>
</dbReference>
<dbReference type="EMBL" id="K02608">
    <property type="protein sequence ID" value="AAA48955.1"/>
    <property type="status" value="JOINED"/>
    <property type="molecule type" value="Genomic_DNA"/>
</dbReference>
<dbReference type="EMBL" id="K02609">
    <property type="protein sequence ID" value="AAA48955.1"/>
    <property type="status" value="JOINED"/>
    <property type="molecule type" value="Genomic_DNA"/>
</dbReference>
<dbReference type="EMBL" id="J00887">
    <property type="protein sequence ID" value="AAA48960.1"/>
    <property type="molecule type" value="mRNA"/>
</dbReference>
<dbReference type="PIR" id="A91284">
    <property type="entry name" value="MOCHLA"/>
</dbReference>
<dbReference type="RefSeq" id="XP_015144626.1">
    <property type="nucleotide sequence ID" value="XM_015289140.1"/>
</dbReference>
<dbReference type="RefSeq" id="XP_015144627.1">
    <property type="nucleotide sequence ID" value="XM_015289141.1"/>
</dbReference>
<dbReference type="PDB" id="1M8Q">
    <property type="method" value="EM"/>
    <property type="resolution" value="70.00 A"/>
    <property type="chains" value="C/F/I/R=51-192"/>
</dbReference>
<dbReference type="PDB" id="2MYS">
    <property type="method" value="X-ray"/>
    <property type="resolution" value="2.80 A"/>
    <property type="chains" value="C=51-192"/>
</dbReference>
<dbReference type="PDBsum" id="1M8Q"/>
<dbReference type="PDBsum" id="2MYS"/>
<dbReference type="SMR" id="P02604"/>
<dbReference type="FunCoup" id="P02604">
    <property type="interactions" value="540"/>
</dbReference>
<dbReference type="STRING" id="9031.ENSGALP00000004578"/>
<dbReference type="Allergome" id="11772">
    <property type="allergen name" value="Gal d 7"/>
</dbReference>
<dbReference type="Allergome" id="11773">
    <property type="allergen name" value="Gal d 7.0101"/>
</dbReference>
<dbReference type="iPTMnet" id="P02604"/>
<dbReference type="PaxDb" id="9031-ENSGALP00000004578"/>
<dbReference type="GeneID" id="396470"/>
<dbReference type="CTD" id="4632"/>
<dbReference type="VEuPathDB" id="HostDB:geneid_396470"/>
<dbReference type="eggNOG" id="KOG0030">
    <property type="taxonomic scope" value="Eukaryota"/>
</dbReference>
<dbReference type="InParanoid" id="P02604"/>
<dbReference type="OrthoDB" id="5959761at2759"/>
<dbReference type="PhylomeDB" id="P02604"/>
<dbReference type="BRENDA" id="5.6.1.8">
    <property type="organism ID" value="1306"/>
</dbReference>
<dbReference type="EvolutionaryTrace" id="P02604"/>
<dbReference type="Proteomes" id="UP000000539">
    <property type="component" value="Chromosome 7"/>
</dbReference>
<dbReference type="Bgee" id="ENSGALG00000002907">
    <property type="expression patterns" value="Expressed in muscle tissue and 6 other cell types or tissues"/>
</dbReference>
<dbReference type="GO" id="GO:0043292">
    <property type="term" value="C:contractile muscle fiber"/>
    <property type="evidence" value="ECO:0000318"/>
    <property type="project" value="GO_Central"/>
</dbReference>
<dbReference type="GO" id="GO:0016460">
    <property type="term" value="C:myosin II complex"/>
    <property type="evidence" value="ECO:0000318"/>
    <property type="project" value="GO_Central"/>
</dbReference>
<dbReference type="GO" id="GO:0005509">
    <property type="term" value="F:calcium ion binding"/>
    <property type="evidence" value="ECO:0007669"/>
    <property type="project" value="InterPro"/>
</dbReference>
<dbReference type="GO" id="GO:0043520">
    <property type="term" value="P:regulation of myosin II filament assembly"/>
    <property type="evidence" value="ECO:0000314"/>
    <property type="project" value="CACAO"/>
</dbReference>
<dbReference type="FunFam" id="1.10.238.10:FF:000019">
    <property type="entry name" value="Myosin light chain 1 skeletal"/>
    <property type="match status" value="1"/>
</dbReference>
<dbReference type="FunFam" id="1.10.238.10:FF:000056">
    <property type="entry name" value="Myosin light chain 1 skeletal"/>
    <property type="match status" value="1"/>
</dbReference>
<dbReference type="Gene3D" id="1.10.238.10">
    <property type="entry name" value="EF-hand"/>
    <property type="match status" value="2"/>
</dbReference>
<dbReference type="InterPro" id="IPR050230">
    <property type="entry name" value="CALM/Myosin/TropC-like"/>
</dbReference>
<dbReference type="InterPro" id="IPR011992">
    <property type="entry name" value="EF-hand-dom_pair"/>
</dbReference>
<dbReference type="InterPro" id="IPR002048">
    <property type="entry name" value="EF_hand_dom"/>
</dbReference>
<dbReference type="PANTHER" id="PTHR23048">
    <property type="entry name" value="MYOSIN LIGHT CHAIN 1, 3"/>
    <property type="match status" value="1"/>
</dbReference>
<dbReference type="PANTHER" id="PTHR23048:SF3">
    <property type="entry name" value="MYOSIN LIGHT CHAIN 1_3, SKELETAL MUSCLE ISOFORM"/>
    <property type="match status" value="1"/>
</dbReference>
<dbReference type="SMART" id="SM00054">
    <property type="entry name" value="EFh"/>
    <property type="match status" value="3"/>
</dbReference>
<dbReference type="SUPFAM" id="SSF47473">
    <property type="entry name" value="EF-hand"/>
    <property type="match status" value="1"/>
</dbReference>
<dbReference type="PROSITE" id="PS50222">
    <property type="entry name" value="EF_HAND_2"/>
    <property type="match status" value="4"/>
</dbReference>